<evidence type="ECO:0000255" key="1">
    <source>
        <dbReference type="HAMAP-Rule" id="MF_00300"/>
    </source>
</evidence>
<accession>Q668V5</accession>
<organism>
    <name type="scientific">Yersinia pseudotuberculosis serotype I (strain IP32953)</name>
    <dbReference type="NCBI Taxonomy" id="273123"/>
    <lineage>
        <taxon>Bacteria</taxon>
        <taxon>Pseudomonadati</taxon>
        <taxon>Pseudomonadota</taxon>
        <taxon>Gammaproteobacteria</taxon>
        <taxon>Enterobacterales</taxon>
        <taxon>Yersiniaceae</taxon>
        <taxon>Yersinia</taxon>
    </lineage>
</organism>
<reference key="1">
    <citation type="journal article" date="2004" name="Proc. Natl. Acad. Sci. U.S.A.">
        <title>Insights into the evolution of Yersinia pestis through whole-genome comparison with Yersinia pseudotuberculosis.</title>
        <authorList>
            <person name="Chain P.S.G."/>
            <person name="Carniel E."/>
            <person name="Larimer F.W."/>
            <person name="Lamerdin J."/>
            <person name="Stoutland P.O."/>
            <person name="Regala W.M."/>
            <person name="Georgescu A.M."/>
            <person name="Vergez L.M."/>
            <person name="Land M.L."/>
            <person name="Motin V.L."/>
            <person name="Brubaker R.R."/>
            <person name="Fowler J."/>
            <person name="Hinnebusch J."/>
            <person name="Marceau M."/>
            <person name="Medigue C."/>
            <person name="Simonet M."/>
            <person name="Chenal-Francisque V."/>
            <person name="Souza B."/>
            <person name="Dacheux D."/>
            <person name="Elliott J.M."/>
            <person name="Derbise A."/>
            <person name="Hauser L.J."/>
            <person name="Garcia E."/>
        </authorList>
    </citation>
    <scope>NUCLEOTIDE SEQUENCE [LARGE SCALE GENOMIC DNA]</scope>
    <source>
        <strain>IP32953</strain>
    </source>
</reference>
<comment type="function">
    <text evidence="1">Catalyzes the anti-1,4-elimination of the C-3 phosphate and the C-6 proR hydrogen from 5-enolpyruvylshikimate-3-phosphate (EPSP) to yield chorismate, which is the branch point compound that serves as the starting substrate for the three terminal pathways of aromatic amino acid biosynthesis. This reaction introduces a second double bond into the aromatic ring system.</text>
</comment>
<comment type="catalytic activity">
    <reaction evidence="1">
        <text>5-O-(1-carboxyvinyl)-3-phosphoshikimate = chorismate + phosphate</text>
        <dbReference type="Rhea" id="RHEA:21020"/>
        <dbReference type="ChEBI" id="CHEBI:29748"/>
        <dbReference type="ChEBI" id="CHEBI:43474"/>
        <dbReference type="ChEBI" id="CHEBI:57701"/>
        <dbReference type="EC" id="4.2.3.5"/>
    </reaction>
</comment>
<comment type="cofactor">
    <cofactor evidence="1">
        <name>FMNH2</name>
        <dbReference type="ChEBI" id="CHEBI:57618"/>
    </cofactor>
    <text evidence="1">Reduced FMN (FMNH(2)).</text>
</comment>
<comment type="pathway">
    <text evidence="1">Metabolic intermediate biosynthesis; chorismate biosynthesis; chorismate from D-erythrose 4-phosphate and phosphoenolpyruvate: step 7/7.</text>
</comment>
<comment type="subunit">
    <text evidence="1">Homotetramer.</text>
</comment>
<comment type="similarity">
    <text evidence="1">Belongs to the chorismate synthase family.</text>
</comment>
<feature type="chain" id="PRO_0000140684" description="Chorismate synthase">
    <location>
        <begin position="1"/>
        <end position="361"/>
    </location>
</feature>
<feature type="binding site" evidence="1">
    <location>
        <position position="48"/>
    </location>
    <ligand>
        <name>NADP(+)</name>
        <dbReference type="ChEBI" id="CHEBI:58349"/>
    </ligand>
</feature>
<feature type="binding site" evidence="1">
    <location>
        <position position="54"/>
    </location>
    <ligand>
        <name>NADP(+)</name>
        <dbReference type="ChEBI" id="CHEBI:58349"/>
    </ligand>
</feature>
<feature type="binding site" evidence="1">
    <location>
        <begin position="125"/>
        <end position="127"/>
    </location>
    <ligand>
        <name>FMN</name>
        <dbReference type="ChEBI" id="CHEBI:58210"/>
    </ligand>
</feature>
<feature type="binding site" evidence="1">
    <location>
        <begin position="238"/>
        <end position="239"/>
    </location>
    <ligand>
        <name>FMN</name>
        <dbReference type="ChEBI" id="CHEBI:58210"/>
    </ligand>
</feature>
<feature type="binding site" evidence="1">
    <location>
        <position position="278"/>
    </location>
    <ligand>
        <name>FMN</name>
        <dbReference type="ChEBI" id="CHEBI:58210"/>
    </ligand>
</feature>
<feature type="binding site" evidence="1">
    <location>
        <begin position="293"/>
        <end position="297"/>
    </location>
    <ligand>
        <name>FMN</name>
        <dbReference type="ChEBI" id="CHEBI:58210"/>
    </ligand>
</feature>
<feature type="binding site" evidence="1">
    <location>
        <position position="319"/>
    </location>
    <ligand>
        <name>FMN</name>
        <dbReference type="ChEBI" id="CHEBI:58210"/>
    </ligand>
</feature>
<name>AROC_YERPS</name>
<sequence>MAGNSIGQFFRVTTFGESHGIALGCIIDGVPPGIPITEADIQLDLDRRRPGTSRYTTQRRELDQVRILSGVFEGVTTGTSIGLMIENTDQRSQDYSAIKDVFRPGHADYTYEQKYGVRDYRGGGRSSARETAMRVAAGAIAKKYLAQKFGVQVRGYLAQMGDVSCDLLDWDLVEQNPFFCPDASKLEPLDALMRELKKAGDSIGAKITVVAENVPVGLGEPVFDRLDADLAHALMSINAVKGVEIGDGFAVVTKRGSENRDEITPQGFQSNHAGGILGGISSGQPVVAHIALKPTSSIMVPGQTINRQGEAVEIVTRGRHDPCVGIRAVPIAEAMMAIVLMDHLLRQRAQCGDVASDVPRW</sequence>
<keyword id="KW-0028">Amino-acid biosynthesis</keyword>
<keyword id="KW-0057">Aromatic amino acid biosynthesis</keyword>
<keyword id="KW-0274">FAD</keyword>
<keyword id="KW-0285">Flavoprotein</keyword>
<keyword id="KW-0288">FMN</keyword>
<keyword id="KW-0456">Lyase</keyword>
<keyword id="KW-0521">NADP</keyword>
<dbReference type="EC" id="4.2.3.5" evidence="1"/>
<dbReference type="EMBL" id="BX936398">
    <property type="protein sequence ID" value="CAH21870.1"/>
    <property type="molecule type" value="Genomic_DNA"/>
</dbReference>
<dbReference type="RefSeq" id="WP_011192692.1">
    <property type="nucleotide sequence ID" value="NC_006155.1"/>
</dbReference>
<dbReference type="SMR" id="Q668V5"/>
<dbReference type="KEGG" id="ypo:BZ17_4007"/>
<dbReference type="KEGG" id="yps:YPTB2632"/>
<dbReference type="PATRIC" id="fig|273123.14.peg.4206"/>
<dbReference type="UniPathway" id="UPA00053">
    <property type="reaction ID" value="UER00090"/>
</dbReference>
<dbReference type="Proteomes" id="UP000001011">
    <property type="component" value="Chromosome"/>
</dbReference>
<dbReference type="GO" id="GO:0005829">
    <property type="term" value="C:cytosol"/>
    <property type="evidence" value="ECO:0007669"/>
    <property type="project" value="TreeGrafter"/>
</dbReference>
<dbReference type="GO" id="GO:0004107">
    <property type="term" value="F:chorismate synthase activity"/>
    <property type="evidence" value="ECO:0007669"/>
    <property type="project" value="UniProtKB-UniRule"/>
</dbReference>
<dbReference type="GO" id="GO:0010181">
    <property type="term" value="F:FMN binding"/>
    <property type="evidence" value="ECO:0007669"/>
    <property type="project" value="TreeGrafter"/>
</dbReference>
<dbReference type="GO" id="GO:0008652">
    <property type="term" value="P:amino acid biosynthetic process"/>
    <property type="evidence" value="ECO:0007669"/>
    <property type="project" value="UniProtKB-KW"/>
</dbReference>
<dbReference type="GO" id="GO:0009073">
    <property type="term" value="P:aromatic amino acid family biosynthetic process"/>
    <property type="evidence" value="ECO:0007669"/>
    <property type="project" value="UniProtKB-KW"/>
</dbReference>
<dbReference type="GO" id="GO:0009423">
    <property type="term" value="P:chorismate biosynthetic process"/>
    <property type="evidence" value="ECO:0007669"/>
    <property type="project" value="UniProtKB-UniRule"/>
</dbReference>
<dbReference type="CDD" id="cd07304">
    <property type="entry name" value="Chorismate_synthase"/>
    <property type="match status" value="1"/>
</dbReference>
<dbReference type="FunFam" id="3.60.150.10:FF:000001">
    <property type="entry name" value="Chorismate synthase"/>
    <property type="match status" value="1"/>
</dbReference>
<dbReference type="Gene3D" id="3.60.150.10">
    <property type="entry name" value="Chorismate synthase AroC"/>
    <property type="match status" value="1"/>
</dbReference>
<dbReference type="HAMAP" id="MF_00300">
    <property type="entry name" value="Chorismate_synth"/>
    <property type="match status" value="1"/>
</dbReference>
<dbReference type="InterPro" id="IPR000453">
    <property type="entry name" value="Chorismate_synth"/>
</dbReference>
<dbReference type="InterPro" id="IPR035904">
    <property type="entry name" value="Chorismate_synth_AroC_sf"/>
</dbReference>
<dbReference type="InterPro" id="IPR020541">
    <property type="entry name" value="Chorismate_synthase_CS"/>
</dbReference>
<dbReference type="NCBIfam" id="TIGR00033">
    <property type="entry name" value="aroC"/>
    <property type="match status" value="1"/>
</dbReference>
<dbReference type="NCBIfam" id="NF003793">
    <property type="entry name" value="PRK05382.1"/>
    <property type="match status" value="1"/>
</dbReference>
<dbReference type="PANTHER" id="PTHR21085">
    <property type="entry name" value="CHORISMATE SYNTHASE"/>
    <property type="match status" value="1"/>
</dbReference>
<dbReference type="PANTHER" id="PTHR21085:SF0">
    <property type="entry name" value="CHORISMATE SYNTHASE"/>
    <property type="match status" value="1"/>
</dbReference>
<dbReference type="Pfam" id="PF01264">
    <property type="entry name" value="Chorismate_synt"/>
    <property type="match status" value="1"/>
</dbReference>
<dbReference type="PIRSF" id="PIRSF001456">
    <property type="entry name" value="Chorismate_synth"/>
    <property type="match status" value="1"/>
</dbReference>
<dbReference type="SUPFAM" id="SSF103263">
    <property type="entry name" value="Chorismate synthase, AroC"/>
    <property type="match status" value="1"/>
</dbReference>
<dbReference type="PROSITE" id="PS00787">
    <property type="entry name" value="CHORISMATE_SYNTHASE_1"/>
    <property type="match status" value="1"/>
</dbReference>
<dbReference type="PROSITE" id="PS00788">
    <property type="entry name" value="CHORISMATE_SYNTHASE_2"/>
    <property type="match status" value="1"/>
</dbReference>
<dbReference type="PROSITE" id="PS00789">
    <property type="entry name" value="CHORISMATE_SYNTHASE_3"/>
    <property type="match status" value="1"/>
</dbReference>
<protein>
    <recommendedName>
        <fullName evidence="1">Chorismate synthase</fullName>
        <shortName evidence="1">CS</shortName>
        <ecNumber evidence="1">4.2.3.5</ecNumber>
    </recommendedName>
    <alternativeName>
        <fullName evidence="1">5-enolpyruvylshikimate-3-phosphate phospholyase</fullName>
    </alternativeName>
</protein>
<gene>
    <name evidence="1" type="primary">aroC</name>
    <name type="ordered locus">YPTB2632</name>
</gene>
<proteinExistence type="inferred from homology"/>